<dbReference type="EC" id="3.6.1.41" evidence="1"/>
<dbReference type="EMBL" id="CP000447">
    <property type="protein sequence ID" value="ABI72918.1"/>
    <property type="molecule type" value="Genomic_DNA"/>
</dbReference>
<dbReference type="RefSeq" id="WP_011638524.1">
    <property type="nucleotide sequence ID" value="NC_008345.1"/>
</dbReference>
<dbReference type="SMR" id="Q07YJ6"/>
<dbReference type="STRING" id="318167.Sfri_3081"/>
<dbReference type="KEGG" id="sfr:Sfri_3081"/>
<dbReference type="eggNOG" id="COG0639">
    <property type="taxonomic scope" value="Bacteria"/>
</dbReference>
<dbReference type="HOGENOM" id="CLU_056184_2_0_6"/>
<dbReference type="OrthoDB" id="9807890at2"/>
<dbReference type="Proteomes" id="UP000000684">
    <property type="component" value="Chromosome"/>
</dbReference>
<dbReference type="GO" id="GO:0008803">
    <property type="term" value="F:bis(5'-nucleosyl)-tetraphosphatase (symmetrical) activity"/>
    <property type="evidence" value="ECO:0007669"/>
    <property type="project" value="UniProtKB-UniRule"/>
</dbReference>
<dbReference type="CDD" id="cd07422">
    <property type="entry name" value="MPP_ApaH"/>
    <property type="match status" value="1"/>
</dbReference>
<dbReference type="Gene3D" id="3.60.21.10">
    <property type="match status" value="1"/>
</dbReference>
<dbReference type="HAMAP" id="MF_00199">
    <property type="entry name" value="ApaH"/>
    <property type="match status" value="1"/>
</dbReference>
<dbReference type="InterPro" id="IPR004617">
    <property type="entry name" value="ApaH"/>
</dbReference>
<dbReference type="InterPro" id="IPR004843">
    <property type="entry name" value="Calcineurin-like_PHP_ApaH"/>
</dbReference>
<dbReference type="InterPro" id="IPR029052">
    <property type="entry name" value="Metallo-depent_PP-like"/>
</dbReference>
<dbReference type="NCBIfam" id="TIGR00668">
    <property type="entry name" value="apaH"/>
    <property type="match status" value="1"/>
</dbReference>
<dbReference type="NCBIfam" id="NF001204">
    <property type="entry name" value="PRK00166.1"/>
    <property type="match status" value="1"/>
</dbReference>
<dbReference type="PANTHER" id="PTHR40942">
    <property type="match status" value="1"/>
</dbReference>
<dbReference type="PANTHER" id="PTHR40942:SF4">
    <property type="entry name" value="CYTOCHROME C5"/>
    <property type="match status" value="1"/>
</dbReference>
<dbReference type="Pfam" id="PF00149">
    <property type="entry name" value="Metallophos"/>
    <property type="match status" value="1"/>
</dbReference>
<dbReference type="PIRSF" id="PIRSF000903">
    <property type="entry name" value="B5n-ttraPtase_sm"/>
    <property type="match status" value="1"/>
</dbReference>
<dbReference type="SUPFAM" id="SSF56300">
    <property type="entry name" value="Metallo-dependent phosphatases"/>
    <property type="match status" value="1"/>
</dbReference>
<comment type="function">
    <text evidence="1">Hydrolyzes diadenosine 5',5'''-P1,P4-tetraphosphate to yield ADP.</text>
</comment>
<comment type="catalytic activity">
    <reaction evidence="1">
        <text>P(1),P(4)-bis(5'-adenosyl) tetraphosphate + H2O = 2 ADP + 2 H(+)</text>
        <dbReference type="Rhea" id="RHEA:24252"/>
        <dbReference type="ChEBI" id="CHEBI:15377"/>
        <dbReference type="ChEBI" id="CHEBI:15378"/>
        <dbReference type="ChEBI" id="CHEBI:58141"/>
        <dbReference type="ChEBI" id="CHEBI:456216"/>
        <dbReference type="EC" id="3.6.1.41"/>
    </reaction>
</comment>
<comment type="similarity">
    <text evidence="1">Belongs to the Ap4A hydrolase family.</text>
</comment>
<evidence type="ECO:0000255" key="1">
    <source>
        <dbReference type="HAMAP-Rule" id="MF_00199"/>
    </source>
</evidence>
<keyword id="KW-0378">Hydrolase</keyword>
<keyword id="KW-1185">Reference proteome</keyword>
<organism>
    <name type="scientific">Shewanella frigidimarina (strain NCIMB 400)</name>
    <dbReference type="NCBI Taxonomy" id="318167"/>
    <lineage>
        <taxon>Bacteria</taxon>
        <taxon>Pseudomonadati</taxon>
        <taxon>Pseudomonadota</taxon>
        <taxon>Gammaproteobacteria</taxon>
        <taxon>Alteromonadales</taxon>
        <taxon>Shewanellaceae</taxon>
        <taxon>Shewanella</taxon>
    </lineage>
</organism>
<protein>
    <recommendedName>
        <fullName evidence="1">Bis(5'-nucleosyl)-tetraphosphatase, symmetrical</fullName>
        <ecNumber evidence="1">3.6.1.41</ecNumber>
    </recommendedName>
    <alternativeName>
        <fullName evidence="1">Ap4A hydrolase</fullName>
    </alternativeName>
    <alternativeName>
        <fullName evidence="1">Diadenosine 5',5'''-P1,P4-tetraphosphate pyrophosphohydrolase</fullName>
    </alternativeName>
    <alternativeName>
        <fullName evidence="1">Diadenosine tetraphosphatase</fullName>
    </alternativeName>
</protein>
<feature type="chain" id="PRO_1000012090" description="Bis(5'-nucleosyl)-tetraphosphatase, symmetrical">
    <location>
        <begin position="1"/>
        <end position="272"/>
    </location>
</feature>
<name>APAH_SHEFN</name>
<proteinExistence type="inferred from homology"/>
<gene>
    <name evidence="1" type="primary">apaH</name>
    <name type="ordered locus">Sfri_3081</name>
</gene>
<accession>Q07YJ6</accession>
<reference key="1">
    <citation type="submission" date="2006-08" db="EMBL/GenBank/DDBJ databases">
        <title>Complete sequence of Shewanella frigidimarina NCIMB 400.</title>
        <authorList>
            <consortium name="US DOE Joint Genome Institute"/>
            <person name="Copeland A."/>
            <person name="Lucas S."/>
            <person name="Lapidus A."/>
            <person name="Barry K."/>
            <person name="Detter J.C."/>
            <person name="Glavina del Rio T."/>
            <person name="Hammon N."/>
            <person name="Israni S."/>
            <person name="Dalin E."/>
            <person name="Tice H."/>
            <person name="Pitluck S."/>
            <person name="Fredrickson J.K."/>
            <person name="Kolker E."/>
            <person name="McCuel L.A."/>
            <person name="DiChristina T."/>
            <person name="Nealson K.H."/>
            <person name="Newman D."/>
            <person name="Tiedje J.M."/>
            <person name="Zhou J."/>
            <person name="Romine M.F."/>
            <person name="Culley D.E."/>
            <person name="Serres M."/>
            <person name="Chertkov O."/>
            <person name="Brettin T."/>
            <person name="Bruce D."/>
            <person name="Han C."/>
            <person name="Tapia R."/>
            <person name="Gilna P."/>
            <person name="Schmutz J."/>
            <person name="Larimer F."/>
            <person name="Land M."/>
            <person name="Hauser L."/>
            <person name="Kyrpides N."/>
            <person name="Mikhailova N."/>
            <person name="Richardson P."/>
        </authorList>
    </citation>
    <scope>NUCLEOTIDE SEQUENCE [LARGE SCALE GENOMIC DNA]</scope>
    <source>
        <strain>NCIMB 400</strain>
    </source>
</reference>
<sequence>MAHYFVGDIQGCYSELQLLLQKVAFNPSKDQLWAVGDLVARGTESLATLRFFQSLQDSAKVVLGNHDLHLLALHGKLKRPHPQDHLDELLNAPDIDNLVNWLRQQPLVRTLPEHNIIMTHAGVPPQWDIAILEHEAEQVSFALQQDDYLSALIAQMYTEDAEHWSPSLHGIDRLRYCINALTRMRFLHLDGRLDFKCKLPPSEQHSTELRPWFEFASKTAPQNTLIFGHWAALMGQTGNPHVVALDTGCCWGEHLTLWHLEKNEIITQKRLI</sequence>